<accession>Q668M6</accession>
<comment type="function">
    <text evidence="1">DNA ligase that catalyzes the formation of phosphodiester linkages between 5'-phosphoryl and 3'-hydroxyl groups in double-stranded DNA using NAD as a coenzyme and as the energy source for the reaction. It is essential for DNA replication and repair of damaged DNA.</text>
</comment>
<comment type="catalytic activity">
    <reaction evidence="1">
        <text>NAD(+) + (deoxyribonucleotide)n-3'-hydroxyl + 5'-phospho-(deoxyribonucleotide)m = (deoxyribonucleotide)n+m + AMP + beta-nicotinamide D-nucleotide.</text>
        <dbReference type="EC" id="6.5.1.2"/>
    </reaction>
</comment>
<comment type="cofactor">
    <cofactor evidence="1">
        <name>Mg(2+)</name>
        <dbReference type="ChEBI" id="CHEBI:18420"/>
    </cofactor>
    <cofactor evidence="1">
        <name>Mn(2+)</name>
        <dbReference type="ChEBI" id="CHEBI:29035"/>
    </cofactor>
</comment>
<comment type="similarity">
    <text evidence="1">Belongs to the NAD-dependent DNA ligase family. LigA subfamily.</text>
</comment>
<keyword id="KW-0227">DNA damage</keyword>
<keyword id="KW-0234">DNA repair</keyword>
<keyword id="KW-0235">DNA replication</keyword>
<keyword id="KW-0436">Ligase</keyword>
<keyword id="KW-0460">Magnesium</keyword>
<keyword id="KW-0464">Manganese</keyword>
<keyword id="KW-0479">Metal-binding</keyword>
<keyword id="KW-0520">NAD</keyword>
<keyword id="KW-0862">Zinc</keyword>
<reference key="1">
    <citation type="journal article" date="2004" name="Proc. Natl. Acad. Sci. U.S.A.">
        <title>Insights into the evolution of Yersinia pestis through whole-genome comparison with Yersinia pseudotuberculosis.</title>
        <authorList>
            <person name="Chain P.S.G."/>
            <person name="Carniel E."/>
            <person name="Larimer F.W."/>
            <person name="Lamerdin J."/>
            <person name="Stoutland P.O."/>
            <person name="Regala W.M."/>
            <person name="Georgescu A.M."/>
            <person name="Vergez L.M."/>
            <person name="Land M.L."/>
            <person name="Motin V.L."/>
            <person name="Brubaker R.R."/>
            <person name="Fowler J."/>
            <person name="Hinnebusch J."/>
            <person name="Marceau M."/>
            <person name="Medigue C."/>
            <person name="Simonet M."/>
            <person name="Chenal-Francisque V."/>
            <person name="Souza B."/>
            <person name="Dacheux D."/>
            <person name="Elliott J.M."/>
            <person name="Derbise A."/>
            <person name="Hauser L.J."/>
            <person name="Garcia E."/>
        </authorList>
    </citation>
    <scope>NUCLEOTIDE SEQUENCE [LARGE SCALE GENOMIC DNA]</scope>
    <source>
        <strain>IP32953</strain>
    </source>
</reference>
<organism>
    <name type="scientific">Yersinia pseudotuberculosis serotype I (strain IP32953)</name>
    <dbReference type="NCBI Taxonomy" id="273123"/>
    <lineage>
        <taxon>Bacteria</taxon>
        <taxon>Pseudomonadati</taxon>
        <taxon>Pseudomonadota</taxon>
        <taxon>Gammaproteobacteria</taxon>
        <taxon>Enterobacterales</taxon>
        <taxon>Yersiniaceae</taxon>
        <taxon>Yersinia</taxon>
    </lineage>
</organism>
<name>DNLJ_YERPS</name>
<sequence length="670" mass="73953">MESIIQQINQLRTSLRHHEHQYHVLDAPEIPDAEYDRMMQQLRDLEAQHPELVTNDSPTQRVGAAPLDAFEQVKHEVPMLSLDNVFDEESYLAFDKRVHDRLKTAEPLTFCCELKLDGLAVSLLYENGELVRAATRGDGTTGENITANVRTIRAIPLRLHGDNVPRRVEVRGEVFMPQAGFEQLNEEARRKGGKVFANPRNAAAGSLRQLDPRITAKRPLTFFCYGVGLLDGGELPRSHIQCLMQFKAWGLPVSERVKLCTGSDQVIAFYRQIEQDRAGLGFDIDGVVIKVDDLVLQEQLGFVARAPRWATAFKFPAQEQITQVREVEFQVGRTGAITPVARLEPVQVAGVIVSNATLHNADEIERLGLRIGDTVIVRRAGDVIPQVVGVVMEQRPDDTKEITFPSQCPVCGSDIERVEGEAVARCTGGLFCAAQRKEALKHFVSRRALDVDGMGDKIIEQLVEKQYVENPADLFQLTAGKLTGLDRMGPKSAQNLIAALEKAKQTTFARFLYALGIREVGEATAANLAAHFRTLDNLRAADIETLKSVPDVGEVVAKHVMNFLSEEHNQKVIEELEKVVSWPEPQQIVVEEIDSPFAGKTVVLTGSLTILSRDEAKDRLTALGAKVSGSVSKKTHLVIAGEAAGSKLAKAQELGIKVIDEAEMIRLLGE</sequence>
<feature type="chain" id="PRO_0000313527" description="DNA ligase">
    <location>
        <begin position="1"/>
        <end position="670"/>
    </location>
</feature>
<feature type="domain" description="BRCT" evidence="1">
    <location>
        <begin position="592"/>
        <end position="670"/>
    </location>
</feature>
<feature type="active site" description="N6-AMP-lysine intermediate" evidence="1">
    <location>
        <position position="115"/>
    </location>
</feature>
<feature type="binding site" evidence="1">
    <location>
        <begin position="32"/>
        <end position="36"/>
    </location>
    <ligand>
        <name>NAD(+)</name>
        <dbReference type="ChEBI" id="CHEBI:57540"/>
    </ligand>
</feature>
<feature type="binding site" evidence="1">
    <location>
        <begin position="81"/>
        <end position="82"/>
    </location>
    <ligand>
        <name>NAD(+)</name>
        <dbReference type="ChEBI" id="CHEBI:57540"/>
    </ligand>
</feature>
<feature type="binding site" evidence="1">
    <location>
        <position position="113"/>
    </location>
    <ligand>
        <name>NAD(+)</name>
        <dbReference type="ChEBI" id="CHEBI:57540"/>
    </ligand>
</feature>
<feature type="binding site" evidence="1">
    <location>
        <position position="136"/>
    </location>
    <ligand>
        <name>NAD(+)</name>
        <dbReference type="ChEBI" id="CHEBI:57540"/>
    </ligand>
</feature>
<feature type="binding site" evidence="1">
    <location>
        <position position="173"/>
    </location>
    <ligand>
        <name>NAD(+)</name>
        <dbReference type="ChEBI" id="CHEBI:57540"/>
    </ligand>
</feature>
<feature type="binding site" evidence="1">
    <location>
        <position position="290"/>
    </location>
    <ligand>
        <name>NAD(+)</name>
        <dbReference type="ChEBI" id="CHEBI:57540"/>
    </ligand>
</feature>
<feature type="binding site" evidence="1">
    <location>
        <position position="314"/>
    </location>
    <ligand>
        <name>NAD(+)</name>
        <dbReference type="ChEBI" id="CHEBI:57540"/>
    </ligand>
</feature>
<feature type="binding site" evidence="1">
    <location>
        <position position="408"/>
    </location>
    <ligand>
        <name>Zn(2+)</name>
        <dbReference type="ChEBI" id="CHEBI:29105"/>
    </ligand>
</feature>
<feature type="binding site" evidence="1">
    <location>
        <position position="411"/>
    </location>
    <ligand>
        <name>Zn(2+)</name>
        <dbReference type="ChEBI" id="CHEBI:29105"/>
    </ligand>
</feature>
<feature type="binding site" evidence="1">
    <location>
        <position position="426"/>
    </location>
    <ligand>
        <name>Zn(2+)</name>
        <dbReference type="ChEBI" id="CHEBI:29105"/>
    </ligand>
</feature>
<feature type="binding site" evidence="1">
    <location>
        <position position="432"/>
    </location>
    <ligand>
        <name>Zn(2+)</name>
        <dbReference type="ChEBI" id="CHEBI:29105"/>
    </ligand>
</feature>
<proteinExistence type="inferred from homology"/>
<protein>
    <recommendedName>
        <fullName evidence="1">DNA ligase</fullName>
        <ecNumber evidence="1">6.5.1.2</ecNumber>
    </recommendedName>
    <alternativeName>
        <fullName evidence="1">Polydeoxyribonucleotide synthase [NAD(+)]</fullName>
    </alternativeName>
</protein>
<gene>
    <name evidence="1" type="primary">ligA</name>
    <name type="ordered locus">YPTB2711</name>
</gene>
<evidence type="ECO:0000255" key="1">
    <source>
        <dbReference type="HAMAP-Rule" id="MF_01588"/>
    </source>
</evidence>
<dbReference type="EC" id="6.5.1.2" evidence="1"/>
<dbReference type="EMBL" id="BX936398">
    <property type="protein sequence ID" value="CAH21949.1"/>
    <property type="molecule type" value="Genomic_DNA"/>
</dbReference>
<dbReference type="RefSeq" id="WP_011192735.1">
    <property type="nucleotide sequence ID" value="NC_006155.1"/>
</dbReference>
<dbReference type="SMR" id="Q668M6"/>
<dbReference type="GeneID" id="49785276"/>
<dbReference type="KEGG" id="ypo:BZ17_3919"/>
<dbReference type="KEGG" id="yps:YPTB2711"/>
<dbReference type="PATRIC" id="fig|273123.14.peg.4120"/>
<dbReference type="Proteomes" id="UP000001011">
    <property type="component" value="Chromosome"/>
</dbReference>
<dbReference type="GO" id="GO:0005829">
    <property type="term" value="C:cytosol"/>
    <property type="evidence" value="ECO:0007669"/>
    <property type="project" value="TreeGrafter"/>
</dbReference>
<dbReference type="GO" id="GO:0003677">
    <property type="term" value="F:DNA binding"/>
    <property type="evidence" value="ECO:0007669"/>
    <property type="project" value="InterPro"/>
</dbReference>
<dbReference type="GO" id="GO:0003911">
    <property type="term" value="F:DNA ligase (NAD+) activity"/>
    <property type="evidence" value="ECO:0007669"/>
    <property type="project" value="UniProtKB-UniRule"/>
</dbReference>
<dbReference type="GO" id="GO:0046872">
    <property type="term" value="F:metal ion binding"/>
    <property type="evidence" value="ECO:0007669"/>
    <property type="project" value="UniProtKB-KW"/>
</dbReference>
<dbReference type="GO" id="GO:0006281">
    <property type="term" value="P:DNA repair"/>
    <property type="evidence" value="ECO:0007669"/>
    <property type="project" value="UniProtKB-KW"/>
</dbReference>
<dbReference type="GO" id="GO:0006260">
    <property type="term" value="P:DNA replication"/>
    <property type="evidence" value="ECO:0007669"/>
    <property type="project" value="UniProtKB-KW"/>
</dbReference>
<dbReference type="CDD" id="cd17748">
    <property type="entry name" value="BRCT_DNA_ligase_like"/>
    <property type="match status" value="1"/>
</dbReference>
<dbReference type="CDD" id="cd00114">
    <property type="entry name" value="LIGANc"/>
    <property type="match status" value="1"/>
</dbReference>
<dbReference type="FunFam" id="1.10.150.20:FF:000006">
    <property type="entry name" value="DNA ligase"/>
    <property type="match status" value="1"/>
</dbReference>
<dbReference type="FunFam" id="1.10.150.20:FF:000007">
    <property type="entry name" value="DNA ligase"/>
    <property type="match status" value="1"/>
</dbReference>
<dbReference type="FunFam" id="1.10.287.610:FF:000002">
    <property type="entry name" value="DNA ligase"/>
    <property type="match status" value="1"/>
</dbReference>
<dbReference type="FunFam" id="2.40.50.140:FF:000012">
    <property type="entry name" value="DNA ligase"/>
    <property type="match status" value="1"/>
</dbReference>
<dbReference type="FunFam" id="3.30.470.30:FF:000001">
    <property type="entry name" value="DNA ligase"/>
    <property type="match status" value="1"/>
</dbReference>
<dbReference type="FunFam" id="3.40.50.10190:FF:000004">
    <property type="entry name" value="DNA ligase"/>
    <property type="match status" value="1"/>
</dbReference>
<dbReference type="FunFam" id="6.20.10.30:FF:000001">
    <property type="entry name" value="DNA ligase"/>
    <property type="match status" value="1"/>
</dbReference>
<dbReference type="Gene3D" id="6.20.10.30">
    <property type="match status" value="1"/>
</dbReference>
<dbReference type="Gene3D" id="1.10.150.20">
    <property type="entry name" value="5' to 3' exonuclease, C-terminal subdomain"/>
    <property type="match status" value="2"/>
</dbReference>
<dbReference type="Gene3D" id="3.40.50.10190">
    <property type="entry name" value="BRCT domain"/>
    <property type="match status" value="1"/>
</dbReference>
<dbReference type="Gene3D" id="3.30.470.30">
    <property type="entry name" value="DNA ligase/mRNA capping enzyme"/>
    <property type="match status" value="1"/>
</dbReference>
<dbReference type="Gene3D" id="1.10.287.610">
    <property type="entry name" value="Helix hairpin bin"/>
    <property type="match status" value="1"/>
</dbReference>
<dbReference type="Gene3D" id="2.40.50.140">
    <property type="entry name" value="Nucleic acid-binding proteins"/>
    <property type="match status" value="1"/>
</dbReference>
<dbReference type="HAMAP" id="MF_01588">
    <property type="entry name" value="DNA_ligase_A"/>
    <property type="match status" value="1"/>
</dbReference>
<dbReference type="InterPro" id="IPR001357">
    <property type="entry name" value="BRCT_dom"/>
</dbReference>
<dbReference type="InterPro" id="IPR036420">
    <property type="entry name" value="BRCT_dom_sf"/>
</dbReference>
<dbReference type="InterPro" id="IPR041663">
    <property type="entry name" value="DisA/LigA_HHH"/>
</dbReference>
<dbReference type="InterPro" id="IPR001679">
    <property type="entry name" value="DNA_ligase"/>
</dbReference>
<dbReference type="InterPro" id="IPR018239">
    <property type="entry name" value="DNA_ligase_AS"/>
</dbReference>
<dbReference type="InterPro" id="IPR033136">
    <property type="entry name" value="DNA_ligase_CS"/>
</dbReference>
<dbReference type="InterPro" id="IPR013839">
    <property type="entry name" value="DNAligase_adenylation"/>
</dbReference>
<dbReference type="InterPro" id="IPR013840">
    <property type="entry name" value="DNAligase_N"/>
</dbReference>
<dbReference type="InterPro" id="IPR003583">
    <property type="entry name" value="Hlx-hairpin-Hlx_DNA-bd_motif"/>
</dbReference>
<dbReference type="InterPro" id="IPR012340">
    <property type="entry name" value="NA-bd_OB-fold"/>
</dbReference>
<dbReference type="InterPro" id="IPR004150">
    <property type="entry name" value="NAD_DNA_ligase_OB"/>
</dbReference>
<dbReference type="InterPro" id="IPR010994">
    <property type="entry name" value="RuvA_2-like"/>
</dbReference>
<dbReference type="InterPro" id="IPR004149">
    <property type="entry name" value="Znf_DNAligase_C4"/>
</dbReference>
<dbReference type="NCBIfam" id="TIGR00575">
    <property type="entry name" value="dnlj"/>
    <property type="match status" value="1"/>
</dbReference>
<dbReference type="NCBIfam" id="NF005932">
    <property type="entry name" value="PRK07956.1"/>
    <property type="match status" value="1"/>
</dbReference>
<dbReference type="PANTHER" id="PTHR23389">
    <property type="entry name" value="CHROMOSOME TRANSMISSION FIDELITY FACTOR 18"/>
    <property type="match status" value="1"/>
</dbReference>
<dbReference type="PANTHER" id="PTHR23389:SF9">
    <property type="entry name" value="DNA LIGASE"/>
    <property type="match status" value="1"/>
</dbReference>
<dbReference type="Pfam" id="PF00533">
    <property type="entry name" value="BRCT"/>
    <property type="match status" value="1"/>
</dbReference>
<dbReference type="Pfam" id="PF01653">
    <property type="entry name" value="DNA_ligase_aden"/>
    <property type="match status" value="1"/>
</dbReference>
<dbReference type="Pfam" id="PF03120">
    <property type="entry name" value="DNA_ligase_OB"/>
    <property type="match status" value="1"/>
</dbReference>
<dbReference type="Pfam" id="PF03119">
    <property type="entry name" value="DNA_ligase_ZBD"/>
    <property type="match status" value="1"/>
</dbReference>
<dbReference type="Pfam" id="PF12826">
    <property type="entry name" value="HHH_2"/>
    <property type="match status" value="1"/>
</dbReference>
<dbReference type="Pfam" id="PF14520">
    <property type="entry name" value="HHH_5"/>
    <property type="match status" value="1"/>
</dbReference>
<dbReference type="Pfam" id="PF22745">
    <property type="entry name" value="Nlig-Ia"/>
    <property type="match status" value="1"/>
</dbReference>
<dbReference type="PIRSF" id="PIRSF001604">
    <property type="entry name" value="LigA"/>
    <property type="match status" value="1"/>
</dbReference>
<dbReference type="SMART" id="SM00292">
    <property type="entry name" value="BRCT"/>
    <property type="match status" value="1"/>
</dbReference>
<dbReference type="SMART" id="SM00278">
    <property type="entry name" value="HhH1"/>
    <property type="match status" value="4"/>
</dbReference>
<dbReference type="SMART" id="SM00532">
    <property type="entry name" value="LIGANc"/>
    <property type="match status" value="1"/>
</dbReference>
<dbReference type="SUPFAM" id="SSF52113">
    <property type="entry name" value="BRCT domain"/>
    <property type="match status" value="1"/>
</dbReference>
<dbReference type="SUPFAM" id="SSF56091">
    <property type="entry name" value="DNA ligase/mRNA capping enzyme, catalytic domain"/>
    <property type="match status" value="1"/>
</dbReference>
<dbReference type="SUPFAM" id="SSF50249">
    <property type="entry name" value="Nucleic acid-binding proteins"/>
    <property type="match status" value="1"/>
</dbReference>
<dbReference type="SUPFAM" id="SSF47781">
    <property type="entry name" value="RuvA domain 2-like"/>
    <property type="match status" value="1"/>
</dbReference>
<dbReference type="PROSITE" id="PS50172">
    <property type="entry name" value="BRCT"/>
    <property type="match status" value="1"/>
</dbReference>
<dbReference type="PROSITE" id="PS01055">
    <property type="entry name" value="DNA_LIGASE_N1"/>
    <property type="match status" value="1"/>
</dbReference>
<dbReference type="PROSITE" id="PS01056">
    <property type="entry name" value="DNA_LIGASE_N2"/>
    <property type="match status" value="1"/>
</dbReference>